<protein>
    <recommendedName>
        <fullName>Neutral amino acid transporter B(0)</fullName>
        <shortName>ATB(0)</shortName>
    </recommendedName>
    <alternativeName>
        <fullName>ASC-like Na(+)-dependent neutral amino acid transporter ASCT2</fullName>
    </alternativeName>
    <alternativeName>
        <fullName evidence="11">Insulin-activated amino acid transporter</fullName>
    </alternativeName>
    <alternativeName>
        <fullName>Sodium-dependent neutral amino acid transporter type 2</fullName>
    </alternativeName>
    <alternativeName>
        <fullName>Solute carrier family 1 member 5</fullName>
    </alternativeName>
</protein>
<comment type="function">
    <text evidence="1 4 9 10">Sodium-coupled antiporter of neutral amino acids. In a tri-substrate transport cycle, exchanges neutral amino acids between the extracellular and intracellular compartments, coupled to the inward cotransport of at least one sodium ion (By similarity) (PubMed:7702599, PubMed:8662767). The preferred substrate is the essential amino acid L-glutamine, a precursor for biosynthesis of proteins, nucleotides and amine sugars as well as an alternative fuel for mitochondrial oxidative phosphorylation. Exchanges L-glutamine with other neutral amino acids such as L-serine, L-threonine and L-asparagine in a bidirectional way. Provides L-glutamine to proliferating stem and activated cells driving the metabolic switch toward cell differentiation (By similarity). The transport cycle is usually pH-independent, with the exception of L-glutamate. Transports extracellular L-glutamate coupled to the cotransport of one proton and one sodium ion in exchange for intracellular L-glutamine counter-ion. May provide for L-glutamate uptake in glial cells regulating glutamine/glutamate cycle in the nervous system (By similarity). Can transport D-amino acids. Mediates D-serine release from the retinal glia potentially affecting NMDA receptor function in retinal neurons (By similarity). Displays sodium- and amino acid-dependent but uncoupled channel-like anion conductance with a preference SCN(-) &gt;&gt; NO3(-) &gt; I(-) &gt; Cl(-) (By similarity). Through binding of the fusogenic protein syncytin-1/ERVW-1 may mediate trophoblasts syncytialization, the spontaneous fusion of their plasma membranes, an essential process in placental development (By similarity).</text>
</comment>
<comment type="catalytic activity">
    <reaction evidence="4">
        <text>L-glutamine(out) + L-serine(in) + Na(+)(out) = L-glutamine(in) + L-serine(out) + Na(+)(in)</text>
        <dbReference type="Rhea" id="RHEA:70855"/>
        <dbReference type="ChEBI" id="CHEBI:29101"/>
        <dbReference type="ChEBI" id="CHEBI:33384"/>
        <dbReference type="ChEBI" id="CHEBI:58359"/>
    </reaction>
</comment>
<comment type="catalytic activity">
    <reaction evidence="4">
        <text>L-glutamine(in) + L-serine(out) + Na(+)(out) = L-glutamine(out) + L-serine(in) + Na(+)(in)</text>
        <dbReference type="Rhea" id="RHEA:70887"/>
        <dbReference type="ChEBI" id="CHEBI:29101"/>
        <dbReference type="ChEBI" id="CHEBI:33384"/>
        <dbReference type="ChEBI" id="CHEBI:58359"/>
    </reaction>
</comment>
<comment type="catalytic activity">
    <reaction evidence="4">
        <text>L-threonine(in) + L-glutamine(out) + Na(+)(out) = L-threonine(out) + L-glutamine(in) + Na(+)(in)</text>
        <dbReference type="Rhea" id="RHEA:70863"/>
        <dbReference type="ChEBI" id="CHEBI:29101"/>
        <dbReference type="ChEBI" id="CHEBI:57926"/>
        <dbReference type="ChEBI" id="CHEBI:58359"/>
    </reaction>
</comment>
<comment type="catalytic activity">
    <reaction evidence="4">
        <text>L-threonine(out) + L-glutamine(in) + Na(+)(out) = L-threonine(in) + L-glutamine(out) + Na(+)(in)</text>
        <dbReference type="Rhea" id="RHEA:70879"/>
        <dbReference type="ChEBI" id="CHEBI:29101"/>
        <dbReference type="ChEBI" id="CHEBI:57926"/>
        <dbReference type="ChEBI" id="CHEBI:58359"/>
    </reaction>
</comment>
<comment type="catalytic activity">
    <reaction evidence="4">
        <text>L-asparagine(in) + L-glutamine(out) + Na(+)(out) = L-asparagine(out) + L-glutamine(in) + Na(+)(in)</text>
        <dbReference type="Rhea" id="RHEA:70859"/>
        <dbReference type="ChEBI" id="CHEBI:29101"/>
        <dbReference type="ChEBI" id="CHEBI:58048"/>
        <dbReference type="ChEBI" id="CHEBI:58359"/>
    </reaction>
</comment>
<comment type="catalytic activity">
    <reaction evidence="4">
        <text>L-asparagine(out) + L-glutamine(in) + Na(+)(out) = L-asparagine(in) + L-glutamine(out) + Na(+)(in)</text>
        <dbReference type="Rhea" id="RHEA:70891"/>
        <dbReference type="ChEBI" id="CHEBI:29101"/>
        <dbReference type="ChEBI" id="CHEBI:58048"/>
        <dbReference type="ChEBI" id="CHEBI:58359"/>
    </reaction>
</comment>
<comment type="catalytic activity">
    <reaction evidence="4">
        <text>L-glutamine(in) + L-alanine(out) + Na(+)(out) = L-glutamine(out) + L-alanine(in) + Na(+)(in)</text>
        <dbReference type="Rhea" id="RHEA:70867"/>
        <dbReference type="ChEBI" id="CHEBI:29101"/>
        <dbReference type="ChEBI" id="CHEBI:57972"/>
        <dbReference type="ChEBI" id="CHEBI:58359"/>
    </reaction>
</comment>
<comment type="catalytic activity">
    <reaction evidence="4">
        <text>L-valine(out) + L-glutamine(in) + Na(+)(out) = L-valine(in) + L-glutamine(out) + Na(+)(in)</text>
        <dbReference type="Rhea" id="RHEA:70871"/>
        <dbReference type="ChEBI" id="CHEBI:29101"/>
        <dbReference type="ChEBI" id="CHEBI:57762"/>
        <dbReference type="ChEBI" id="CHEBI:58359"/>
    </reaction>
</comment>
<comment type="catalytic activity">
    <reaction evidence="4">
        <text>L-glutamine(in) + L-methionine(out) + Na(+)(out) = L-glutamine(out) + L-methionine(in) + Na(+)(in)</text>
        <dbReference type="Rhea" id="RHEA:70875"/>
        <dbReference type="ChEBI" id="CHEBI:29101"/>
        <dbReference type="ChEBI" id="CHEBI:57844"/>
        <dbReference type="ChEBI" id="CHEBI:58359"/>
    </reaction>
</comment>
<comment type="catalytic activity">
    <reaction evidence="4">
        <text>L-glutamine(in) + L-glutamate(out) + Na(+)(out) + H(+)(out) = L-glutamine(out) + L-glutamate(in) + Na(+)(in) + H(+)(in)</text>
        <dbReference type="Rhea" id="RHEA:70883"/>
        <dbReference type="ChEBI" id="CHEBI:15378"/>
        <dbReference type="ChEBI" id="CHEBI:29101"/>
        <dbReference type="ChEBI" id="CHEBI:29985"/>
        <dbReference type="ChEBI" id="CHEBI:58359"/>
    </reaction>
</comment>
<comment type="catalytic activity">
    <reaction evidence="7">
        <text>D-serine(in) + L-glutamine(out) + Na(+)(out) = D-serine(out) + L-glutamine(in) + Na(+)(in)</text>
        <dbReference type="Rhea" id="RHEA:75307"/>
        <dbReference type="ChEBI" id="CHEBI:29101"/>
        <dbReference type="ChEBI" id="CHEBI:35247"/>
        <dbReference type="ChEBI" id="CHEBI:58359"/>
    </reaction>
</comment>
<comment type="catalytic activity">
    <reaction evidence="7">
        <text>D-serine(in) + L-alanine(out) + Na(+)(out) = D-serine(out) + L-alanine(in) + Na(+)(in)</text>
        <dbReference type="Rhea" id="RHEA:75311"/>
        <dbReference type="ChEBI" id="CHEBI:29101"/>
        <dbReference type="ChEBI" id="CHEBI:35247"/>
        <dbReference type="ChEBI" id="CHEBI:57972"/>
    </reaction>
</comment>
<comment type="catalytic activity">
    <reaction evidence="1">
        <text>nitrate(in) = nitrate(out)</text>
        <dbReference type="Rhea" id="RHEA:34923"/>
        <dbReference type="ChEBI" id="CHEBI:17632"/>
    </reaction>
</comment>
<comment type="catalytic activity">
    <reaction evidence="1">
        <text>iodide(out) = iodide(in)</text>
        <dbReference type="Rhea" id="RHEA:66324"/>
        <dbReference type="ChEBI" id="CHEBI:16382"/>
    </reaction>
</comment>
<comment type="catalytic activity">
    <reaction evidence="1">
        <text>thiocyanate(in) = thiocyanate(out)</text>
        <dbReference type="Rhea" id="RHEA:75347"/>
        <dbReference type="ChEBI" id="CHEBI:18022"/>
    </reaction>
</comment>
<comment type="activity regulation">
    <text evidence="10">Down-regulated at acidic pH, with the exception of L-glutamate transport which is up-regulated instead.</text>
</comment>
<comment type="biophysicochemical properties">
    <kinetics>
        <KM evidence="10">18.4 uM for L-alanine</KM>
        <KM evidence="10">18.6 uM for L-serine</KM>
        <KM evidence="10">20.5 uM for L-threonine</KM>
        <KM evidence="10">18.8 uM for L-cysteine</KM>
        <KM evidence="10">23.8 uM for L-glutamine</KM>
        <KM evidence="10">288 uM for L-methionine</KM>
        <KM evidence="10">361 uM for L-glycine</KM>
        <KM evidence="10">367 uM for L-leucine</KM>
        <KM evidence="10">522 uM for L-valine</KM>
        <KM evidence="10">1630 uM for L-glutamate</KM>
    </kinetics>
</comment>
<comment type="subunit">
    <text evidence="4">Homotrimer.</text>
</comment>
<comment type="subcellular location">
    <subcellularLocation>
        <location evidence="9 10">Cell membrane</location>
        <topology evidence="4">Multi-pass membrane protein</topology>
    </subcellularLocation>
    <subcellularLocation>
        <location evidence="4">Melanosome</location>
    </subcellularLocation>
</comment>
<comment type="tissue specificity">
    <text evidence="7 9 10">Highly expressed in adipose tissue. Detected in lung, skeletal muscle, large intestine, kidney and testis (PubMed:7702599, PubMed:8662767). Expressed in lung, brain, kidney and neural retina (at protein level). Expressed in Mueller cells (at protein level) (PubMed:17094966).</text>
</comment>
<comment type="induction">
    <text evidence="9">Up-regulated during differentiation of preadipocytes into adipocytes upon treatment with a combination of glucocorticoids and INS.</text>
</comment>
<comment type="disruption phenotype">
    <text evidence="8">Mice are born at the expected Mendelian rate and have normal lifespans without obvious abnormalities. They show a moderate decrease of hematopoietic progenitor numbers under steady state. Constitutive or conditional SLC1A5 deletion confers resistance to hematological malignancies.</text>
</comment>
<comment type="similarity">
    <text evidence="12">Belongs to the dicarboxylate/amino acid:cation symporter (DAACS) (TC 2.A.23) family. SLC1A5 subfamily.</text>
</comment>
<gene>
    <name type="primary">Slc1a5</name>
    <name type="synonym">Aaat</name>
    <name type="synonym">Asct2</name>
    <name type="synonym">Slc1a7</name>
</gene>
<accession>P51912</accession>
<accession>Q61326</accession>
<evidence type="ECO:0000250" key="1">
    <source>
        <dbReference type="UniProtKB" id="D3ZJ25"/>
    </source>
</evidence>
<evidence type="ECO:0000250" key="2">
    <source>
        <dbReference type="UniProtKB" id="O59010"/>
    </source>
</evidence>
<evidence type="ECO:0000250" key="3">
    <source>
        <dbReference type="UniProtKB" id="P43003"/>
    </source>
</evidence>
<evidence type="ECO:0000250" key="4">
    <source>
        <dbReference type="UniProtKB" id="Q15758"/>
    </source>
</evidence>
<evidence type="ECO:0000255" key="5"/>
<evidence type="ECO:0000256" key="6">
    <source>
        <dbReference type="SAM" id="MobiDB-lite"/>
    </source>
</evidence>
<evidence type="ECO:0000269" key="7">
    <source>
    </source>
</evidence>
<evidence type="ECO:0000269" key="8">
    <source>
    </source>
</evidence>
<evidence type="ECO:0000269" key="9">
    <source>
    </source>
</evidence>
<evidence type="ECO:0000269" key="10">
    <source>
    </source>
</evidence>
<evidence type="ECO:0000303" key="11">
    <source>
    </source>
</evidence>
<evidence type="ECO:0000305" key="12"/>
<evidence type="ECO:0007744" key="13">
    <source>
    </source>
</evidence>
<evidence type="ECO:0007744" key="14">
    <source>
    </source>
</evidence>
<sequence>MAVDPPKADPKGVAVDSSRRCPALGSREDQSAKAGGCCGSRDRVRRCIRANLLVLLTVAAVVAGVGLGLGVSAAGGADALGPARLTRFAFPGELLLRLLKMIILPLVVCSLIGGAASLDPSALGRVGAWALLFFLVTTLLASALGVGLALALKPGAAVTAITSINDSVVDPCARSAPTKEALDSFLDLVRNIFPSNLVSAAFRSFATSYEPKDNSCKIPQSCIQREINSTMVQLLCEVEGMNILGLVVFAIVFGVALRKLGPEGELLIRFFNSFNDATMVLVSWIMWYAPVGILFLVASKIVEMKDVRQLFISLGKYILCCLLGHAIHGLLVLPLIYFLFTRKNPYRFLWGIMTPLATAFGTSSSSATLPLMMKCVEEKNGVAKHISRFILPIGATVNMDGAALFQCVAAVFIAQLNGVSLDFVKIITILVTATASSVGAAGIPAGGVLTLAIILEAVSLPVKDISLILAVDWLVDRSCTVLNVEGDAFGAGLLQSYVDRTKMPSSEPELIQVKNEVSLNPLPLATEEGNPLLKQYQGPTGDSSATFEKESVM</sequence>
<keyword id="KW-0007">Acetylation</keyword>
<keyword id="KW-0029">Amino-acid transport</keyword>
<keyword id="KW-0050">Antiport</keyword>
<keyword id="KW-1003">Cell membrane</keyword>
<keyword id="KW-0325">Glycoprotein</keyword>
<keyword id="KW-0472">Membrane</keyword>
<keyword id="KW-0479">Metal-binding</keyword>
<keyword id="KW-0597">Phosphoprotein</keyword>
<keyword id="KW-1185">Reference proteome</keyword>
<keyword id="KW-0915">Sodium</keyword>
<keyword id="KW-0769">Symport</keyword>
<keyword id="KW-0812">Transmembrane</keyword>
<keyword id="KW-1133">Transmembrane helix</keyword>
<keyword id="KW-0813">Transport</keyword>
<organism>
    <name type="scientific">Mus musculus</name>
    <name type="common">Mouse</name>
    <dbReference type="NCBI Taxonomy" id="10090"/>
    <lineage>
        <taxon>Eukaryota</taxon>
        <taxon>Metazoa</taxon>
        <taxon>Chordata</taxon>
        <taxon>Craniata</taxon>
        <taxon>Vertebrata</taxon>
        <taxon>Euteleostomi</taxon>
        <taxon>Mammalia</taxon>
        <taxon>Eutheria</taxon>
        <taxon>Euarchontoglires</taxon>
        <taxon>Glires</taxon>
        <taxon>Rodentia</taxon>
        <taxon>Myomorpha</taxon>
        <taxon>Muroidea</taxon>
        <taxon>Muridae</taxon>
        <taxon>Murinae</taxon>
        <taxon>Mus</taxon>
        <taxon>Mus</taxon>
    </lineage>
</organism>
<name>AAAT_MOUSE</name>
<proteinExistence type="evidence at protein level"/>
<dbReference type="EMBL" id="L42115">
    <property type="protein sequence ID" value="AAA66264.1"/>
    <property type="molecule type" value="mRNA"/>
</dbReference>
<dbReference type="EMBL" id="D85044">
    <property type="protein sequence ID" value="BAA12716.1"/>
    <property type="molecule type" value="mRNA"/>
</dbReference>
<dbReference type="PIR" id="JC4149">
    <property type="entry name" value="JC4149"/>
</dbReference>
<dbReference type="SMR" id="P51912"/>
<dbReference type="FunCoup" id="P51912">
    <property type="interactions" value="44"/>
</dbReference>
<dbReference type="IntAct" id="P51912">
    <property type="interactions" value="1"/>
</dbReference>
<dbReference type="STRING" id="10090.ENSMUSP00000104136"/>
<dbReference type="TCDB" id="2.A.23.3.2">
    <property type="family name" value="the dicarboxylate/amino acid:cation (na(+) or h(+)) symporter (daacs) family"/>
</dbReference>
<dbReference type="GlyCosmos" id="P51912">
    <property type="glycosylation" value="2 sites, No reported glycans"/>
</dbReference>
<dbReference type="GlyGen" id="P51912">
    <property type="glycosylation" value="3 sites, 1 O-linked glycan (1 site)"/>
</dbReference>
<dbReference type="iPTMnet" id="P51912"/>
<dbReference type="PhosphoSitePlus" id="P51912"/>
<dbReference type="SwissPalm" id="P51912"/>
<dbReference type="jPOST" id="P51912"/>
<dbReference type="PaxDb" id="10090-ENSMUSP00000104136"/>
<dbReference type="PeptideAtlas" id="P51912"/>
<dbReference type="ProteomicsDB" id="286038"/>
<dbReference type="Pumba" id="P51912"/>
<dbReference type="AGR" id="MGI:105305"/>
<dbReference type="MGI" id="MGI:105305">
    <property type="gene designation" value="Slc1a5"/>
</dbReference>
<dbReference type="eggNOG" id="KOG3787">
    <property type="taxonomic scope" value="Eukaryota"/>
</dbReference>
<dbReference type="InParanoid" id="P51912"/>
<dbReference type="Reactome" id="R-MMU-352230">
    <property type="pathway name" value="Amino acid transport across the plasma membrane"/>
</dbReference>
<dbReference type="Reactome" id="R-MMU-9013149">
    <property type="pathway name" value="RAC1 GTPase cycle"/>
</dbReference>
<dbReference type="Reactome" id="R-MMU-9013406">
    <property type="pathway name" value="RHOQ GTPase cycle"/>
</dbReference>
<dbReference type="Reactome" id="R-MMU-9013407">
    <property type="pathway name" value="RHOH GTPase cycle"/>
</dbReference>
<dbReference type="Reactome" id="R-MMU-9013423">
    <property type="pathway name" value="RAC3 GTPase cycle"/>
</dbReference>
<dbReference type="ChiTaRS" id="Slc1a5">
    <property type="organism name" value="mouse"/>
</dbReference>
<dbReference type="PRO" id="PR:P51912"/>
<dbReference type="Proteomes" id="UP000000589">
    <property type="component" value="Unplaced"/>
</dbReference>
<dbReference type="RNAct" id="P51912">
    <property type="molecule type" value="protein"/>
</dbReference>
<dbReference type="GO" id="GO:0009925">
    <property type="term" value="C:basal plasma membrane"/>
    <property type="evidence" value="ECO:0000314"/>
    <property type="project" value="ARUK-UCL"/>
</dbReference>
<dbReference type="GO" id="GO:0042470">
    <property type="term" value="C:melanosome"/>
    <property type="evidence" value="ECO:0007669"/>
    <property type="project" value="UniProtKB-SubCell"/>
</dbReference>
<dbReference type="GO" id="GO:0016020">
    <property type="term" value="C:membrane"/>
    <property type="evidence" value="ECO:0000250"/>
    <property type="project" value="UniProtKB"/>
</dbReference>
<dbReference type="GO" id="GO:0005886">
    <property type="term" value="C:plasma membrane"/>
    <property type="evidence" value="ECO:0000314"/>
    <property type="project" value="ARUK-UCL"/>
</dbReference>
<dbReference type="GO" id="GO:0015297">
    <property type="term" value="F:antiporter activity"/>
    <property type="evidence" value="ECO:0007669"/>
    <property type="project" value="UniProtKB-KW"/>
</dbReference>
<dbReference type="GO" id="GO:0015183">
    <property type="term" value="F:L-aspartate transmembrane transporter activity"/>
    <property type="evidence" value="ECO:0000314"/>
    <property type="project" value="ARUK-UCL"/>
</dbReference>
<dbReference type="GO" id="GO:0015186">
    <property type="term" value="F:L-glutamine transmembrane transporter activity"/>
    <property type="evidence" value="ECO:0000250"/>
    <property type="project" value="UniProtKB"/>
</dbReference>
<dbReference type="GO" id="GO:0046872">
    <property type="term" value="F:metal ion binding"/>
    <property type="evidence" value="ECO:0007669"/>
    <property type="project" value="UniProtKB-KW"/>
</dbReference>
<dbReference type="GO" id="GO:0015175">
    <property type="term" value="F:neutral L-amino acid transmembrane transporter activity"/>
    <property type="evidence" value="ECO:0000314"/>
    <property type="project" value="MGI"/>
</dbReference>
<dbReference type="GO" id="GO:0015293">
    <property type="term" value="F:symporter activity"/>
    <property type="evidence" value="ECO:0007669"/>
    <property type="project" value="UniProtKB-KW"/>
</dbReference>
<dbReference type="GO" id="GO:0006868">
    <property type="term" value="P:glutamine transport"/>
    <property type="evidence" value="ECO:0000250"/>
    <property type="project" value="UniProtKB"/>
</dbReference>
<dbReference type="GO" id="GO:0140009">
    <property type="term" value="P:L-aspartate import across plasma membrane"/>
    <property type="evidence" value="ECO:0000314"/>
    <property type="project" value="ARUK-UCL"/>
</dbReference>
<dbReference type="GO" id="GO:0070207">
    <property type="term" value="P:protein homotrimerization"/>
    <property type="evidence" value="ECO:0000250"/>
    <property type="project" value="UniProtKB"/>
</dbReference>
<dbReference type="GO" id="GO:0150104">
    <property type="term" value="P:transport across blood-brain barrier"/>
    <property type="evidence" value="ECO:0000314"/>
    <property type="project" value="ARUK-UCL"/>
</dbReference>
<dbReference type="FunFam" id="1.10.3860.10:FF:000005">
    <property type="entry name" value="Amino acid transporter"/>
    <property type="match status" value="1"/>
</dbReference>
<dbReference type="Gene3D" id="1.10.3860.10">
    <property type="entry name" value="Sodium:dicarboxylate symporter"/>
    <property type="match status" value="1"/>
</dbReference>
<dbReference type="InterPro" id="IPR050746">
    <property type="entry name" value="DAACS"/>
</dbReference>
<dbReference type="InterPro" id="IPR001991">
    <property type="entry name" value="Na-dicarboxylate_symporter"/>
</dbReference>
<dbReference type="InterPro" id="IPR018107">
    <property type="entry name" value="Na-dicarboxylate_symporter_CS"/>
</dbReference>
<dbReference type="InterPro" id="IPR036458">
    <property type="entry name" value="Na:dicarbo_symporter_sf"/>
</dbReference>
<dbReference type="PANTHER" id="PTHR11958:SF19">
    <property type="entry name" value="NEUTRAL AMINO ACID TRANSPORTER B(0)"/>
    <property type="match status" value="1"/>
</dbReference>
<dbReference type="PANTHER" id="PTHR11958">
    <property type="entry name" value="SODIUM/DICARBOXYLATE SYMPORTER-RELATED"/>
    <property type="match status" value="1"/>
</dbReference>
<dbReference type="Pfam" id="PF00375">
    <property type="entry name" value="SDF"/>
    <property type="match status" value="1"/>
</dbReference>
<dbReference type="PRINTS" id="PR00173">
    <property type="entry name" value="EDTRNSPORT"/>
</dbReference>
<dbReference type="SUPFAM" id="SSF118215">
    <property type="entry name" value="Proton glutamate symport protein"/>
    <property type="match status" value="1"/>
</dbReference>
<dbReference type="PROSITE" id="PS00713">
    <property type="entry name" value="NA_DICARBOXYL_SYMP_1"/>
    <property type="match status" value="1"/>
</dbReference>
<dbReference type="PROSITE" id="PS00714">
    <property type="entry name" value="NA_DICARBOXYL_SYMP_2"/>
    <property type="match status" value="1"/>
</dbReference>
<reference key="1">
    <citation type="journal article" date="1995" name="Biochem. Biophys. Res. Commun.">
        <title>Expression of a novel insulin-activated amino acid transporter gene during differentiation of 3T3-L1 preadipocytes into adipocytes.</title>
        <authorList>
            <person name="Liao K."/>
            <person name="Lane M.D."/>
        </authorList>
    </citation>
    <scope>NUCLEOTIDE SEQUENCE [MRNA]</scope>
    <scope>FUNCTION</scope>
    <scope>SUBCELLULAR LOCATION</scope>
    <scope>TISSUE SPECIFICITY</scope>
    <scope>INDUCTION</scope>
    <source>
        <tissue>Adipose tissue</tissue>
    </source>
</reference>
<reference key="2">
    <citation type="journal article" date="1996" name="J. Biol. Chem.">
        <title>Cloning and functional characterization of a system ASC-like Na+-dependent neutral amino acid transporter.</title>
        <authorList>
            <person name="Utsunomiya-Tate N."/>
            <person name="Endou H."/>
            <person name="Kanai Y."/>
        </authorList>
    </citation>
    <scope>NUCLEOTIDE SEQUENCE [MRNA]</scope>
    <scope>FUNCTION</scope>
    <scope>BIOPHYSICOCHEMICAL PROPERTIES</scope>
    <scope>ACTIVITY REGULATION</scope>
    <scope>SUBCELLULAR LOCATION</scope>
    <scope>TISSUE SPECIFICITY</scope>
    <source>
        <strain>JCL:ICR</strain>
        <tissue>Testis</tissue>
    </source>
</reference>
<reference key="3">
    <citation type="journal article" date="2007" name="Exp. Eye Res.">
        <title>Functional and molecular analysis of D-serine transport in retinal Mueller cells.</title>
        <authorList>
            <person name="Dun Y."/>
            <person name="Mysona B."/>
            <person name="Itagaki S."/>
            <person name="Martin-Studdard A."/>
            <person name="Ganapathy V."/>
            <person name="Smith S.B."/>
        </authorList>
    </citation>
    <scope>TISSUE SPECIFICITY</scope>
</reference>
<reference key="4">
    <citation type="journal article" date="2009" name="Immunity">
        <title>The phagosomal proteome in interferon-gamma-activated macrophages.</title>
        <authorList>
            <person name="Trost M."/>
            <person name="English L."/>
            <person name="Lemieux S."/>
            <person name="Courcelles M."/>
            <person name="Desjardins M."/>
            <person name="Thibault P."/>
        </authorList>
    </citation>
    <scope>PHOSPHORYLATION [LARGE SCALE ANALYSIS] AT SER-506 AND SER-518</scope>
    <scope>IDENTIFICATION BY MASS SPECTROMETRY [LARGE SCALE ANALYSIS]</scope>
</reference>
<reference key="5">
    <citation type="journal article" date="2010" name="Cell">
        <title>A tissue-specific atlas of mouse protein phosphorylation and expression.</title>
        <authorList>
            <person name="Huttlin E.L."/>
            <person name="Jedrychowski M.P."/>
            <person name="Elias J.E."/>
            <person name="Goswami T."/>
            <person name="Rad R."/>
            <person name="Beausoleil S.A."/>
            <person name="Villen J."/>
            <person name="Haas W."/>
            <person name="Sowa M.E."/>
            <person name="Gygi S.P."/>
        </authorList>
    </citation>
    <scope>PHOSPHORYLATION [LARGE SCALE ANALYSIS] AT SER-506; SER-518 AND SER-543</scope>
    <scope>IDENTIFICATION BY MASS SPECTROMETRY [LARGE SCALE ANALYSIS]</scope>
    <source>
        <tissue>Brown adipose tissue</tissue>
        <tissue>Kidney</tissue>
        <tissue>Lung</tissue>
        <tissue>Pancreas</tissue>
        <tissue>Spleen</tissue>
        <tissue>Testis</tissue>
    </source>
</reference>
<reference key="6">
    <citation type="journal article" date="2019" name="Nat. Metab.">
        <title>Critical role of ASCT2-mediated amino acid metabolism in promoting leukaemia development and progression.</title>
        <authorList>
            <person name="Ni F."/>
            <person name="Yu W.M."/>
            <person name="Li Z."/>
            <person name="Graham D.K."/>
            <person name="Jin L."/>
            <person name="Kang S."/>
            <person name="Rossi M.R."/>
            <person name="Li S."/>
            <person name="Broxmeyer H.E."/>
            <person name="Qu C.K."/>
        </authorList>
    </citation>
    <scope>DISRUPTION PHENOTYPE</scope>
</reference>
<feature type="chain" id="PRO_0000202083" description="Neutral amino acid transporter B(0)">
    <location>
        <begin position="1"/>
        <end position="553"/>
    </location>
</feature>
<feature type="topological domain" description="Cytoplasmic" evidence="12">
    <location>
        <begin position="1"/>
        <end position="50"/>
    </location>
</feature>
<feature type="transmembrane region" description="Helical; Name=1" evidence="3">
    <location>
        <begin position="51"/>
        <end position="80"/>
    </location>
</feature>
<feature type="topological domain" description="Extracellular" evidence="12">
    <location>
        <begin position="81"/>
        <end position="93"/>
    </location>
</feature>
<feature type="transmembrane region" description="Helical; Name=2" evidence="3">
    <location>
        <begin position="94"/>
        <end position="115"/>
    </location>
</feature>
<feature type="topological domain" description="Cytoplasmic" evidence="12">
    <location>
        <begin position="116"/>
        <end position="129"/>
    </location>
</feature>
<feature type="transmembrane region" description="Helical; Name=3" evidence="3">
    <location>
        <begin position="130"/>
        <end position="152"/>
    </location>
</feature>
<feature type="topological domain" description="Extracellular" evidence="12">
    <location>
        <begin position="153"/>
        <end position="236"/>
    </location>
</feature>
<feature type="transmembrane region" description="Helical; Name=4" evidence="3">
    <location>
        <begin position="237"/>
        <end position="260"/>
    </location>
</feature>
<feature type="topological domain" description="Cytoplasmic" evidence="12">
    <location>
        <begin position="261"/>
        <end position="269"/>
    </location>
</feature>
<feature type="transmembrane region" description="Helical; Name=5" evidence="3">
    <location>
        <begin position="270"/>
        <end position="297"/>
    </location>
</feature>
<feature type="topological domain" description="Extracellular" evidence="12">
    <location>
        <begin position="298"/>
        <end position="318"/>
    </location>
</feature>
<feature type="transmembrane region" description="Helical; Name=6" evidence="3">
    <location>
        <begin position="319"/>
        <end position="340"/>
    </location>
</feature>
<feature type="topological domain" description="Cytoplasmic" evidence="12">
    <location>
        <begin position="341"/>
        <end position="345"/>
    </location>
</feature>
<feature type="intramembrane region" description="Discontinuously helical" evidence="3">
    <location>
        <begin position="346"/>
        <end position="376"/>
    </location>
</feature>
<feature type="topological domain" description="Cytoplasmic" evidence="12">
    <location>
        <begin position="377"/>
        <end position="385"/>
    </location>
</feature>
<feature type="transmembrane region" description="Helical; Name=7" evidence="3">
    <location>
        <begin position="386"/>
        <end position="412"/>
    </location>
</feature>
<feature type="topological domain" description="Extracellular" evidence="12">
    <location>
        <begin position="413"/>
        <end position="425"/>
    </location>
</feature>
<feature type="intramembrane region" description="Discontinuously helical" evidence="3">
    <location>
        <begin position="426"/>
        <end position="459"/>
    </location>
</feature>
<feature type="topological domain" description="Extracellular" evidence="12">
    <location>
        <begin position="460"/>
        <end position="472"/>
    </location>
</feature>
<feature type="transmembrane region" description="Helical; Name=8" evidence="3">
    <location>
        <begin position="473"/>
        <end position="494"/>
    </location>
</feature>
<feature type="topological domain" description="Cytoplasmic" evidence="12">
    <location>
        <begin position="495"/>
        <end position="553"/>
    </location>
</feature>
<feature type="region of interest" description="Disordered" evidence="6">
    <location>
        <begin position="531"/>
        <end position="553"/>
    </location>
</feature>
<feature type="compositionally biased region" description="Polar residues" evidence="6">
    <location>
        <begin position="537"/>
        <end position="546"/>
    </location>
</feature>
<feature type="binding site" evidence="2">
    <location>
        <position position="394"/>
    </location>
    <ligand>
        <name>Na(+)</name>
        <dbReference type="ChEBI" id="CHEBI:29101"/>
        <label>1</label>
    </ligand>
</feature>
<feature type="binding site" evidence="3">
    <location>
        <position position="396"/>
    </location>
    <ligand>
        <name>Na(+)</name>
        <dbReference type="ChEBI" id="CHEBI:29101"/>
        <label>2</label>
    </ligand>
</feature>
<feature type="binding site" evidence="2">
    <location>
        <position position="398"/>
    </location>
    <ligand>
        <name>Na(+)</name>
        <dbReference type="ChEBI" id="CHEBI:29101"/>
        <label>1</label>
    </ligand>
</feature>
<feature type="binding site" evidence="2">
    <location>
        <position position="483"/>
    </location>
    <ligand>
        <name>Na(+)</name>
        <dbReference type="ChEBI" id="CHEBI:29101"/>
        <label>1</label>
    </ligand>
</feature>
<feature type="binding site" evidence="2">
    <location>
        <position position="487"/>
    </location>
    <ligand>
        <name>Na(+)</name>
        <dbReference type="ChEBI" id="CHEBI:29101"/>
        <label>1</label>
    </ligand>
</feature>
<feature type="modified residue" description="N-acetylmethionine" evidence="4">
    <location>
        <position position="1"/>
    </location>
</feature>
<feature type="modified residue" description="Phosphoserine" evidence="4">
    <location>
        <position position="505"/>
    </location>
</feature>
<feature type="modified residue" description="Phosphoserine" evidence="13 14">
    <location>
        <position position="506"/>
    </location>
</feature>
<feature type="modified residue" description="Phosphoserine" evidence="13 14">
    <location>
        <position position="518"/>
    </location>
</feature>
<feature type="modified residue" description="Phosphoserine" evidence="14">
    <location>
        <position position="543"/>
    </location>
</feature>
<feature type="modified residue" description="Phosphoserine" evidence="4">
    <location>
        <position position="551"/>
    </location>
</feature>
<feature type="glycosylation site" description="N-linked (GlcNAc...) asparagine" evidence="5">
    <location>
        <position position="165"/>
    </location>
</feature>
<feature type="glycosylation site" description="N-linked (GlcNAc...) asparagine" evidence="5">
    <location>
        <position position="228"/>
    </location>
</feature>
<feature type="sequence conflict" description="In Ref. 1; AAA66264." evidence="12" ref="1">
    <original>VAVDSSRRC</original>
    <variation>SSGGFHRNGG</variation>
    <location>
        <begin position="13"/>
        <end position="21"/>
    </location>
</feature>
<feature type="sequence conflict" description="In Ref. 1; AAA66264." evidence="12" ref="1">
    <original>LLFFLVTTLLASALGVGLALALKP</original>
    <variation>ALFPGHHTARVGARRGFGPGAEA</variation>
    <location>
        <begin position="131"/>
        <end position="154"/>
    </location>
</feature>
<feature type="sequence conflict" description="In Ref. 1; AAA66264." evidence="12" ref="1">
    <original>A</original>
    <variation>V</variation>
    <location>
        <position position="181"/>
    </location>
</feature>